<feature type="chain" id="PRO_0000054817" description="WW domain-containing oxidoreductase">
    <location>
        <begin position="1"/>
        <end position="414"/>
    </location>
</feature>
<feature type="domain" description="WW 1" evidence="3">
    <location>
        <begin position="16"/>
        <end position="49"/>
    </location>
</feature>
<feature type="domain" description="WW 2" evidence="3">
    <location>
        <begin position="57"/>
        <end position="90"/>
    </location>
</feature>
<feature type="region of interest" description="Disordered" evidence="4">
    <location>
        <begin position="1"/>
        <end position="24"/>
    </location>
</feature>
<feature type="region of interest" description="Interaction with MAPT" evidence="1">
    <location>
        <begin position="125"/>
        <end position="414"/>
    </location>
</feature>
<feature type="region of interest" description="Mediates targeting to the mitochondria" evidence="1">
    <location>
        <begin position="209"/>
        <end position="273"/>
    </location>
</feature>
<feature type="short sequence motif" description="Nuclear localization signal" evidence="1">
    <location>
        <begin position="50"/>
        <end position="55"/>
    </location>
</feature>
<feature type="active site" description="Proton acceptor" evidence="1">
    <location>
        <position position="293"/>
    </location>
</feature>
<feature type="binding site" evidence="1">
    <location>
        <begin position="131"/>
        <end position="137"/>
    </location>
    <ligand>
        <name>NADP(+)</name>
        <dbReference type="ChEBI" id="CHEBI:58349"/>
    </ligand>
</feature>
<feature type="binding site" evidence="1">
    <location>
        <position position="260"/>
    </location>
    <ligand>
        <name>substrate</name>
    </ligand>
</feature>
<feature type="modified residue" description="Phosphothreonine" evidence="2">
    <location>
        <position position="12"/>
    </location>
</feature>
<feature type="modified residue" description="Phosphoserine" evidence="2">
    <location>
        <position position="14"/>
    </location>
</feature>
<feature type="modified residue" description="Phosphotyrosine" evidence="2">
    <location>
        <position position="33"/>
    </location>
</feature>
<feature type="modified residue" description="Phosphotyrosine; by TNK2" evidence="2">
    <location>
        <position position="287"/>
    </location>
</feature>
<protein>
    <recommendedName>
        <fullName>WW domain-containing oxidoreductase</fullName>
        <ecNumber>1.1.1.-</ecNumber>
    </recommendedName>
</protein>
<keyword id="KW-0053">Apoptosis</keyword>
<keyword id="KW-0963">Cytoplasm</keyword>
<keyword id="KW-0333">Golgi apparatus</keyword>
<keyword id="KW-0458">Lysosome</keyword>
<keyword id="KW-0496">Mitochondrion</keyword>
<keyword id="KW-0521">NADP</keyword>
<keyword id="KW-0539">Nucleus</keyword>
<keyword id="KW-0560">Oxidoreductase</keyword>
<keyword id="KW-0597">Phosphoprotein</keyword>
<keyword id="KW-1185">Reference proteome</keyword>
<keyword id="KW-0677">Repeat</keyword>
<keyword id="KW-0043">Tumor suppressor</keyword>
<keyword id="KW-0832">Ubl conjugation</keyword>
<keyword id="KW-0879">Wnt signaling pathway</keyword>
<gene>
    <name type="primary">WWOX</name>
</gene>
<proteinExistence type="evidence at transcript level"/>
<reference key="1">
    <citation type="submission" date="2004-11" db="EMBL/GenBank/DDBJ databases">
        <authorList>
            <consortium name="The German cDNA consortium"/>
        </authorList>
    </citation>
    <scope>NUCLEOTIDE SEQUENCE [LARGE SCALE MRNA]</scope>
    <source>
        <tissue>Kidney</tissue>
    </source>
</reference>
<dbReference type="EC" id="1.1.1.-"/>
<dbReference type="EMBL" id="CR859266">
    <property type="protein sequence ID" value="CAH91445.1"/>
    <property type="molecule type" value="mRNA"/>
</dbReference>
<dbReference type="RefSeq" id="NP_001125849.1">
    <property type="nucleotide sequence ID" value="NM_001132377.1"/>
</dbReference>
<dbReference type="SMR" id="Q5R9W5"/>
<dbReference type="FunCoup" id="Q5R9W5">
    <property type="interactions" value="1439"/>
</dbReference>
<dbReference type="STRING" id="9601.ENSPPYP00000008550"/>
<dbReference type="GeneID" id="100172779"/>
<dbReference type="KEGG" id="pon:100172779"/>
<dbReference type="CTD" id="51741"/>
<dbReference type="eggNOG" id="KOG1208">
    <property type="taxonomic scope" value="Eukaryota"/>
</dbReference>
<dbReference type="InParanoid" id="Q5R9W5"/>
<dbReference type="OrthoDB" id="9989144at2759"/>
<dbReference type="Proteomes" id="UP000001595">
    <property type="component" value="Unplaced"/>
</dbReference>
<dbReference type="GO" id="GO:0005737">
    <property type="term" value="C:cytoplasm"/>
    <property type="evidence" value="ECO:0000250"/>
    <property type="project" value="UniProtKB"/>
</dbReference>
<dbReference type="GO" id="GO:0005794">
    <property type="term" value="C:Golgi apparatus"/>
    <property type="evidence" value="ECO:0007669"/>
    <property type="project" value="UniProtKB-SubCell"/>
</dbReference>
<dbReference type="GO" id="GO:0005764">
    <property type="term" value="C:lysosome"/>
    <property type="evidence" value="ECO:0007669"/>
    <property type="project" value="UniProtKB-SubCell"/>
</dbReference>
<dbReference type="GO" id="GO:0005739">
    <property type="term" value="C:mitochondrion"/>
    <property type="evidence" value="ECO:0007669"/>
    <property type="project" value="UniProtKB-SubCell"/>
</dbReference>
<dbReference type="GO" id="GO:0005634">
    <property type="term" value="C:nucleus"/>
    <property type="evidence" value="ECO:0007669"/>
    <property type="project" value="UniProtKB-SubCell"/>
</dbReference>
<dbReference type="GO" id="GO:0016491">
    <property type="term" value="F:oxidoreductase activity"/>
    <property type="evidence" value="ECO:0007669"/>
    <property type="project" value="UniProtKB-KW"/>
</dbReference>
<dbReference type="GO" id="GO:0006915">
    <property type="term" value="P:apoptotic process"/>
    <property type="evidence" value="ECO:0007669"/>
    <property type="project" value="UniProtKB-KW"/>
</dbReference>
<dbReference type="GO" id="GO:0030178">
    <property type="term" value="P:negative regulation of Wnt signaling pathway"/>
    <property type="evidence" value="ECO:0000250"/>
    <property type="project" value="UniProtKB"/>
</dbReference>
<dbReference type="GO" id="GO:0016055">
    <property type="term" value="P:Wnt signaling pathway"/>
    <property type="evidence" value="ECO:0007669"/>
    <property type="project" value="UniProtKB-KW"/>
</dbReference>
<dbReference type="CDD" id="cd09809">
    <property type="entry name" value="human_WWOX_like_SDR_c-like"/>
    <property type="match status" value="1"/>
</dbReference>
<dbReference type="CDD" id="cd00201">
    <property type="entry name" value="WW"/>
    <property type="match status" value="2"/>
</dbReference>
<dbReference type="FunFam" id="2.20.70.10:FF:000032">
    <property type="entry name" value="WW domain containing oxidoreductase"/>
    <property type="match status" value="1"/>
</dbReference>
<dbReference type="FunFam" id="2.20.70.10:FF:000040">
    <property type="entry name" value="WW domain containing oxidoreductase"/>
    <property type="match status" value="1"/>
</dbReference>
<dbReference type="FunFam" id="3.40.50.720:FF:000353">
    <property type="entry name" value="WW domain-containing oxidoreductase"/>
    <property type="match status" value="1"/>
</dbReference>
<dbReference type="Gene3D" id="2.20.70.10">
    <property type="match status" value="2"/>
</dbReference>
<dbReference type="Gene3D" id="3.40.50.720">
    <property type="entry name" value="NAD(P)-binding Rossmann-like Domain"/>
    <property type="match status" value="1"/>
</dbReference>
<dbReference type="InterPro" id="IPR036291">
    <property type="entry name" value="NAD(P)-bd_dom_sf"/>
</dbReference>
<dbReference type="InterPro" id="IPR002347">
    <property type="entry name" value="SDR_fam"/>
</dbReference>
<dbReference type="InterPro" id="IPR001202">
    <property type="entry name" value="WW_dom"/>
</dbReference>
<dbReference type="InterPro" id="IPR036020">
    <property type="entry name" value="WW_dom_sf"/>
</dbReference>
<dbReference type="InterPro" id="IPR042732">
    <property type="entry name" value="WWOX_SDR_c-like"/>
</dbReference>
<dbReference type="PANTHER" id="PTHR24320">
    <property type="entry name" value="RETINOL DEHYDROGENASE"/>
    <property type="match status" value="1"/>
</dbReference>
<dbReference type="PANTHER" id="PTHR24320:SF282">
    <property type="entry name" value="WW DOMAIN-CONTAINING OXIDOREDUCTASE"/>
    <property type="match status" value="1"/>
</dbReference>
<dbReference type="Pfam" id="PF00106">
    <property type="entry name" value="adh_short"/>
    <property type="match status" value="1"/>
</dbReference>
<dbReference type="Pfam" id="PF00397">
    <property type="entry name" value="WW"/>
    <property type="match status" value="2"/>
</dbReference>
<dbReference type="PRINTS" id="PR00081">
    <property type="entry name" value="GDHRDH"/>
</dbReference>
<dbReference type="SMART" id="SM00456">
    <property type="entry name" value="WW"/>
    <property type="match status" value="2"/>
</dbReference>
<dbReference type="SUPFAM" id="SSF51735">
    <property type="entry name" value="NAD(P)-binding Rossmann-fold domains"/>
    <property type="match status" value="1"/>
</dbReference>
<dbReference type="SUPFAM" id="SSF51045">
    <property type="entry name" value="WW domain"/>
    <property type="match status" value="2"/>
</dbReference>
<dbReference type="PROSITE" id="PS01159">
    <property type="entry name" value="WW_DOMAIN_1"/>
    <property type="match status" value="2"/>
</dbReference>
<dbReference type="PROSITE" id="PS50020">
    <property type="entry name" value="WW_DOMAIN_2"/>
    <property type="match status" value="2"/>
</dbReference>
<organism>
    <name type="scientific">Pongo abelii</name>
    <name type="common">Sumatran orangutan</name>
    <name type="synonym">Pongo pygmaeus abelii</name>
    <dbReference type="NCBI Taxonomy" id="9601"/>
    <lineage>
        <taxon>Eukaryota</taxon>
        <taxon>Metazoa</taxon>
        <taxon>Chordata</taxon>
        <taxon>Craniata</taxon>
        <taxon>Vertebrata</taxon>
        <taxon>Euteleostomi</taxon>
        <taxon>Mammalia</taxon>
        <taxon>Eutheria</taxon>
        <taxon>Euarchontoglires</taxon>
        <taxon>Primates</taxon>
        <taxon>Haplorrhini</taxon>
        <taxon>Catarrhini</taxon>
        <taxon>Hominidae</taxon>
        <taxon>Pongo</taxon>
    </lineage>
</organism>
<name>WWOX_PONAB</name>
<accession>Q5R9W5</accession>
<evidence type="ECO:0000250" key="1"/>
<evidence type="ECO:0000250" key="2">
    <source>
        <dbReference type="UniProtKB" id="Q9NZC7"/>
    </source>
</evidence>
<evidence type="ECO:0000255" key="3">
    <source>
        <dbReference type="PROSITE-ProRule" id="PRU00224"/>
    </source>
</evidence>
<evidence type="ECO:0000256" key="4">
    <source>
        <dbReference type="SAM" id="MobiDB-lite"/>
    </source>
</evidence>
<evidence type="ECO:0000305" key="5"/>
<sequence length="414" mass="46513">MAALRYAGLDDTDSEDELPPGWEERTTKDGWVYYANHTEEKTQWEHPKTGKRKRVAGDLPYGWEQGTDENGQVFFVDHINKRTTYLDPRLAFTVDDNPTKPTTRQRYDGSTTALEILQGRDFTGKVVVVTGANSGIGFETAKSFALHGAHVILACRNMARASEAVSRILEEWHKAKVEAVTLDLALLRSVQHFAEAFKAKNVPLHVLVCNAATFALPWSLTKDGLETTFQVNHLGHFYLVQLLQDVLCRSAPARVIVVSSESHRFTDINDSLGKLDFSRLSPTKNDYWAMLAYNRSKLCNVLFSNELHRRLSPRGVTSNAVHPGNMMYSNIHRSWWVYTLLFTLARPFTKSMQQGAATTVYCAAAPELEGLGGMYFNNCCRCMPSPEAQSEETARTLWALSERLIQERLGSQSG</sequence>
<comment type="function">
    <text evidence="2">Putative oxidoreductase. Acts as a tumor suppressor and plays a role in apoptosis. May function synergistically with p53/TP53 to control genotoxic stress-induced cell death. Plays a role in TGFB1 signaling and TGFB1-mediated cell death. May also play a role in tumor necrosis factor (TNF)-mediated cell death. Required for normal bone development. Inhibits Wnt signaling, probably by sequestering DVL2 in the cytoplasm (By similarity).</text>
</comment>
<comment type="subunit">
    <text evidence="1 2">Interacts with TP53, p73/TP73 and MAPK8. Interacts with MAPT/TAU, RUNX2 and HYAL2 (By similarity). Forms a ternary complex with TP53 and MDM2. Interacts with ERBB4, LITAF and WBP1. Interacts with DVL1, DVL2 and DVL3. May interact with FAM189B and SCOTIN. Interacts with TNK2. Interacts with TMEM207 (By similarity). Interacts (via WW domain) with VOPP1 (By similarity).</text>
</comment>
<comment type="subcellular location">
    <subcellularLocation>
        <location evidence="2">Cytoplasm</location>
    </subcellularLocation>
    <subcellularLocation>
        <location evidence="2">Nucleus</location>
    </subcellularLocation>
    <subcellularLocation>
        <location evidence="2">Mitochondrion</location>
    </subcellularLocation>
    <subcellularLocation>
        <location evidence="2">Golgi apparatus</location>
    </subcellularLocation>
    <subcellularLocation>
        <location evidence="2">Lysosome</location>
    </subcellularLocation>
    <text evidence="1 2">Partially localizes to the mitochondria (By similarity). Translocates to the nucleus upon genotoxic stress or TNF stimulation (By similarity). Translocates to the nucleus in response to TGFB1. Isoform 5 and isoform 6 may localize in the nucleus (By similarity). Localized to the lysosome probably upon binding to VOPP1 (By similarity).</text>
</comment>
<comment type="domain">
    <text evidence="1">The WW 1 domain mediates interaction with TP53, TP73, TFAP2C, LITAF and WBP1.</text>
</comment>
<comment type="PTM">
    <text evidence="1">Phosphorylated upon genotoxic stress. Phosphorylation of Tyr-33 regulates interaction with TP53, TP73 and MAPK8. May also regulate proapoptotic activity. Phosphorylation by TNK2 is associated with polyubiquitination and degradation (By similarity).</text>
</comment>
<comment type="PTM">
    <text evidence="1">Ubiquitinated when phosphorylated by TNK2, leading to its degradation.</text>
</comment>
<comment type="similarity">
    <text evidence="5">Belongs to the short-chain dehydrogenases/reductases (SDR) family.</text>
</comment>